<dbReference type="EMBL" id="CP000712">
    <property type="protein sequence ID" value="ABQ80111.1"/>
    <property type="molecule type" value="Genomic_DNA"/>
</dbReference>
<dbReference type="SMR" id="A5W7K1"/>
<dbReference type="KEGG" id="ppf:Pput_3987"/>
<dbReference type="eggNOG" id="COG0851">
    <property type="taxonomic scope" value="Bacteria"/>
</dbReference>
<dbReference type="HOGENOM" id="CLU_137929_2_1_6"/>
<dbReference type="GO" id="GO:0051301">
    <property type="term" value="P:cell division"/>
    <property type="evidence" value="ECO:0007669"/>
    <property type="project" value="UniProtKB-KW"/>
</dbReference>
<dbReference type="GO" id="GO:0032955">
    <property type="term" value="P:regulation of division septum assembly"/>
    <property type="evidence" value="ECO:0007669"/>
    <property type="project" value="InterPro"/>
</dbReference>
<dbReference type="FunFam" id="3.30.1070.10:FF:000001">
    <property type="entry name" value="Cell division topological specificity factor"/>
    <property type="match status" value="1"/>
</dbReference>
<dbReference type="Gene3D" id="3.30.1070.10">
    <property type="entry name" value="Cell division topological specificity factor MinE"/>
    <property type="match status" value="1"/>
</dbReference>
<dbReference type="HAMAP" id="MF_00262">
    <property type="entry name" value="MinE"/>
    <property type="match status" value="1"/>
</dbReference>
<dbReference type="InterPro" id="IPR005527">
    <property type="entry name" value="MinE"/>
</dbReference>
<dbReference type="InterPro" id="IPR036707">
    <property type="entry name" value="MinE_sf"/>
</dbReference>
<dbReference type="NCBIfam" id="TIGR01215">
    <property type="entry name" value="minE"/>
    <property type="match status" value="1"/>
</dbReference>
<dbReference type="NCBIfam" id="NF001422">
    <property type="entry name" value="PRK00296.1"/>
    <property type="match status" value="1"/>
</dbReference>
<dbReference type="NCBIfam" id="NF010595">
    <property type="entry name" value="PRK13989.1"/>
    <property type="match status" value="1"/>
</dbReference>
<dbReference type="Pfam" id="PF03776">
    <property type="entry name" value="MinE"/>
    <property type="match status" value="1"/>
</dbReference>
<dbReference type="SUPFAM" id="SSF55229">
    <property type="entry name" value="Cell division protein MinE topological specificity domain"/>
    <property type="match status" value="1"/>
</dbReference>
<name>MINE_PSEP1</name>
<proteinExistence type="inferred from homology"/>
<organism>
    <name type="scientific">Pseudomonas putida (strain ATCC 700007 / DSM 6899 / JCM 31910 / BCRC 17059 / LMG 24140 / F1)</name>
    <dbReference type="NCBI Taxonomy" id="351746"/>
    <lineage>
        <taxon>Bacteria</taxon>
        <taxon>Pseudomonadati</taxon>
        <taxon>Pseudomonadota</taxon>
        <taxon>Gammaproteobacteria</taxon>
        <taxon>Pseudomonadales</taxon>
        <taxon>Pseudomonadaceae</taxon>
        <taxon>Pseudomonas</taxon>
    </lineage>
</organism>
<reference key="1">
    <citation type="submission" date="2007-05" db="EMBL/GenBank/DDBJ databases">
        <title>Complete sequence of Pseudomonas putida F1.</title>
        <authorList>
            <consortium name="US DOE Joint Genome Institute"/>
            <person name="Copeland A."/>
            <person name="Lucas S."/>
            <person name="Lapidus A."/>
            <person name="Barry K."/>
            <person name="Detter J.C."/>
            <person name="Glavina del Rio T."/>
            <person name="Hammon N."/>
            <person name="Israni S."/>
            <person name="Dalin E."/>
            <person name="Tice H."/>
            <person name="Pitluck S."/>
            <person name="Chain P."/>
            <person name="Malfatti S."/>
            <person name="Shin M."/>
            <person name="Vergez L."/>
            <person name="Schmutz J."/>
            <person name="Larimer F."/>
            <person name="Land M."/>
            <person name="Hauser L."/>
            <person name="Kyrpides N."/>
            <person name="Lykidis A."/>
            <person name="Parales R."/>
            <person name="Richardson P."/>
        </authorList>
    </citation>
    <scope>NUCLEOTIDE SEQUENCE [LARGE SCALE GENOMIC DNA]</scope>
    <source>
        <strain>ATCC 700007 / DSM 6899 / JCM 31910 / BCRC 17059 / LMG 24140 / F1</strain>
    </source>
</reference>
<keyword id="KW-0131">Cell cycle</keyword>
<keyword id="KW-0132">Cell division</keyword>
<comment type="function">
    <text evidence="1">Prevents the cell division inhibition by proteins MinC and MinD at internal division sites while permitting inhibition at polar sites. This ensures cell division at the proper site by restricting the formation of a division septum at the midpoint of the long axis of the cell.</text>
</comment>
<comment type="similarity">
    <text evidence="1">Belongs to the MinE family.</text>
</comment>
<gene>
    <name evidence="1" type="primary">minE</name>
    <name type="ordered locus">Pput_3987</name>
</gene>
<accession>A5W7K1</accession>
<evidence type="ECO:0000255" key="1">
    <source>
        <dbReference type="HAMAP-Rule" id="MF_00262"/>
    </source>
</evidence>
<protein>
    <recommendedName>
        <fullName evidence="1">Cell division topological specificity factor</fullName>
    </recommendedName>
</protein>
<sequence>MNLFDFFRGRQKQTSASVAKERLQIIVAHERGQRSEPDYLPALQKELLEVIRKYVNIGNDDVHIELENQGSCSILELNITLPDR</sequence>
<feature type="chain" id="PRO_1000047792" description="Cell division topological specificity factor">
    <location>
        <begin position="1"/>
        <end position="84"/>
    </location>
</feature>